<evidence type="ECO:0000255" key="1">
    <source>
        <dbReference type="HAMAP-Rule" id="MF_00607"/>
    </source>
</evidence>
<name>RSMA_FRATO</name>
<protein>
    <recommendedName>
        <fullName evidence="1">Ribosomal RNA small subunit methyltransferase A</fullName>
        <ecNumber evidence="1">2.1.1.182</ecNumber>
    </recommendedName>
    <alternativeName>
        <fullName evidence="1">16S rRNA (adenine(1518)-N(6)/adenine(1519)-N(6))-dimethyltransferase</fullName>
    </alternativeName>
    <alternativeName>
        <fullName evidence="1">16S rRNA dimethyladenosine transferase</fullName>
    </alternativeName>
    <alternativeName>
        <fullName evidence="1">16S rRNA dimethylase</fullName>
    </alternativeName>
    <alternativeName>
        <fullName evidence="1">S-adenosylmethionine-6-N', N'-adenosyl(rRNA) dimethyltransferase</fullName>
    </alternativeName>
</protein>
<gene>
    <name evidence="1" type="primary">rsmA</name>
    <name evidence="1" type="synonym">ksgA</name>
    <name type="ordered locus">FTH_1541</name>
</gene>
<dbReference type="EC" id="2.1.1.182" evidence="1"/>
<dbReference type="EMBL" id="CP000437">
    <property type="protein sequence ID" value="ABI83337.1"/>
    <property type="molecule type" value="Genomic_DNA"/>
</dbReference>
<dbReference type="RefSeq" id="WP_003016977.1">
    <property type="nucleotide sequence ID" value="NC_017463.1"/>
</dbReference>
<dbReference type="SMR" id="Q0BKP7"/>
<dbReference type="KEGG" id="fth:FTH_1541"/>
<dbReference type="GO" id="GO:0005829">
    <property type="term" value="C:cytosol"/>
    <property type="evidence" value="ECO:0007669"/>
    <property type="project" value="TreeGrafter"/>
</dbReference>
<dbReference type="GO" id="GO:0052908">
    <property type="term" value="F:16S rRNA (adenine(1518)-N(6)/adenine(1519)-N(6))-dimethyltransferase activity"/>
    <property type="evidence" value="ECO:0007669"/>
    <property type="project" value="UniProtKB-EC"/>
</dbReference>
<dbReference type="GO" id="GO:0003723">
    <property type="term" value="F:RNA binding"/>
    <property type="evidence" value="ECO:0007669"/>
    <property type="project" value="UniProtKB-KW"/>
</dbReference>
<dbReference type="FunFam" id="1.10.8.100:FF:000001">
    <property type="entry name" value="Ribosomal RNA small subunit methyltransferase A"/>
    <property type="match status" value="1"/>
</dbReference>
<dbReference type="FunFam" id="3.40.50.150:FF:000023">
    <property type="entry name" value="Ribosomal RNA small subunit methyltransferase A"/>
    <property type="match status" value="1"/>
</dbReference>
<dbReference type="Gene3D" id="1.10.8.100">
    <property type="entry name" value="Ribosomal RNA adenine dimethylase-like, domain 2"/>
    <property type="match status" value="1"/>
</dbReference>
<dbReference type="Gene3D" id="3.40.50.150">
    <property type="entry name" value="Vaccinia Virus protein VP39"/>
    <property type="match status" value="1"/>
</dbReference>
<dbReference type="HAMAP" id="MF_00607">
    <property type="entry name" value="16SrRNA_methyltr_A"/>
    <property type="match status" value="1"/>
</dbReference>
<dbReference type="InterPro" id="IPR001737">
    <property type="entry name" value="KsgA/Erm"/>
</dbReference>
<dbReference type="InterPro" id="IPR023165">
    <property type="entry name" value="rRNA_Ade_diMease-like_C"/>
</dbReference>
<dbReference type="InterPro" id="IPR020596">
    <property type="entry name" value="rRNA_Ade_Mease_Trfase_CS"/>
</dbReference>
<dbReference type="InterPro" id="IPR020598">
    <property type="entry name" value="rRNA_Ade_methylase_Trfase_N"/>
</dbReference>
<dbReference type="InterPro" id="IPR011530">
    <property type="entry name" value="rRNA_adenine_dimethylase"/>
</dbReference>
<dbReference type="InterPro" id="IPR029063">
    <property type="entry name" value="SAM-dependent_MTases_sf"/>
</dbReference>
<dbReference type="NCBIfam" id="TIGR00755">
    <property type="entry name" value="ksgA"/>
    <property type="match status" value="1"/>
</dbReference>
<dbReference type="PANTHER" id="PTHR11727">
    <property type="entry name" value="DIMETHYLADENOSINE TRANSFERASE"/>
    <property type="match status" value="1"/>
</dbReference>
<dbReference type="PANTHER" id="PTHR11727:SF7">
    <property type="entry name" value="DIMETHYLADENOSINE TRANSFERASE-RELATED"/>
    <property type="match status" value="1"/>
</dbReference>
<dbReference type="Pfam" id="PF00398">
    <property type="entry name" value="RrnaAD"/>
    <property type="match status" value="1"/>
</dbReference>
<dbReference type="SMART" id="SM00650">
    <property type="entry name" value="rADc"/>
    <property type="match status" value="1"/>
</dbReference>
<dbReference type="SUPFAM" id="SSF53335">
    <property type="entry name" value="S-adenosyl-L-methionine-dependent methyltransferases"/>
    <property type="match status" value="1"/>
</dbReference>
<dbReference type="PROSITE" id="PS01131">
    <property type="entry name" value="RRNA_A_DIMETH"/>
    <property type="match status" value="1"/>
</dbReference>
<dbReference type="PROSITE" id="PS51689">
    <property type="entry name" value="SAM_RNA_A_N6_MT"/>
    <property type="match status" value="1"/>
</dbReference>
<comment type="function">
    <text evidence="1">Specifically dimethylates two adjacent adenosines (A1518 and A1519) in the loop of a conserved hairpin near the 3'-end of 16S rRNA in the 30S particle. May play a critical role in biogenesis of 30S subunits.</text>
</comment>
<comment type="catalytic activity">
    <reaction evidence="1">
        <text>adenosine(1518)/adenosine(1519) in 16S rRNA + 4 S-adenosyl-L-methionine = N(6)-dimethyladenosine(1518)/N(6)-dimethyladenosine(1519) in 16S rRNA + 4 S-adenosyl-L-homocysteine + 4 H(+)</text>
        <dbReference type="Rhea" id="RHEA:19609"/>
        <dbReference type="Rhea" id="RHEA-COMP:10232"/>
        <dbReference type="Rhea" id="RHEA-COMP:10233"/>
        <dbReference type="ChEBI" id="CHEBI:15378"/>
        <dbReference type="ChEBI" id="CHEBI:57856"/>
        <dbReference type="ChEBI" id="CHEBI:59789"/>
        <dbReference type="ChEBI" id="CHEBI:74411"/>
        <dbReference type="ChEBI" id="CHEBI:74493"/>
        <dbReference type="EC" id="2.1.1.182"/>
    </reaction>
</comment>
<comment type="subcellular location">
    <subcellularLocation>
        <location evidence="1">Cytoplasm</location>
    </subcellularLocation>
</comment>
<comment type="similarity">
    <text evidence="1">Belongs to the class I-like SAM-binding methyltransferase superfamily. rRNA adenine N(6)-methyltransferase family. RsmA subfamily.</text>
</comment>
<proteinExistence type="inferred from homology"/>
<reference key="1">
    <citation type="journal article" date="2006" name="J. Bacteriol.">
        <title>Chromosome rearrangement and diversification of Francisella tularensis revealed by the type B (OSU18) genome sequence.</title>
        <authorList>
            <person name="Petrosino J.F."/>
            <person name="Xiang Q."/>
            <person name="Karpathy S.E."/>
            <person name="Jiang H."/>
            <person name="Yerrapragada S."/>
            <person name="Liu Y."/>
            <person name="Gioia J."/>
            <person name="Hemphill L."/>
            <person name="Gonzalez A."/>
            <person name="Raghavan T.M."/>
            <person name="Uzman A."/>
            <person name="Fox G.E."/>
            <person name="Highlander S."/>
            <person name="Reichard M."/>
            <person name="Morton R.J."/>
            <person name="Clinkenbeard K.D."/>
            <person name="Weinstock G.M."/>
        </authorList>
    </citation>
    <scope>NUCLEOTIDE SEQUENCE [LARGE SCALE GENOMIC DNA]</scope>
    <source>
        <strain>OSU18</strain>
    </source>
</reference>
<keyword id="KW-0963">Cytoplasm</keyword>
<keyword id="KW-0489">Methyltransferase</keyword>
<keyword id="KW-0694">RNA-binding</keyword>
<keyword id="KW-0698">rRNA processing</keyword>
<keyword id="KW-0949">S-adenosyl-L-methionine</keyword>
<keyword id="KW-0808">Transferase</keyword>
<feature type="chain" id="PRO_1000056620" description="Ribosomal RNA small subunit methyltransferase A">
    <location>
        <begin position="1"/>
        <end position="262"/>
    </location>
</feature>
<feature type="binding site" evidence="1">
    <location>
        <position position="14"/>
    </location>
    <ligand>
        <name>S-adenosyl-L-methionine</name>
        <dbReference type="ChEBI" id="CHEBI:59789"/>
    </ligand>
</feature>
<feature type="binding site" evidence="1">
    <location>
        <position position="16"/>
    </location>
    <ligand>
        <name>S-adenosyl-L-methionine</name>
        <dbReference type="ChEBI" id="CHEBI:59789"/>
    </ligand>
</feature>
<feature type="binding site" evidence="1">
    <location>
        <position position="41"/>
    </location>
    <ligand>
        <name>S-adenosyl-L-methionine</name>
        <dbReference type="ChEBI" id="CHEBI:59789"/>
    </ligand>
</feature>
<feature type="binding site" evidence="1">
    <location>
        <position position="62"/>
    </location>
    <ligand>
        <name>S-adenosyl-L-methionine</name>
        <dbReference type="ChEBI" id="CHEBI:59789"/>
    </ligand>
</feature>
<feature type="binding site" evidence="1">
    <location>
        <position position="87"/>
    </location>
    <ligand>
        <name>S-adenosyl-L-methionine</name>
        <dbReference type="ChEBI" id="CHEBI:59789"/>
    </ligand>
</feature>
<feature type="binding site" evidence="1">
    <location>
        <position position="109"/>
    </location>
    <ligand>
        <name>S-adenosyl-L-methionine</name>
        <dbReference type="ChEBI" id="CHEBI:59789"/>
    </ligand>
</feature>
<accession>Q0BKP7</accession>
<organism>
    <name type="scientific">Francisella tularensis subsp. holarctica (strain OSU18)</name>
    <dbReference type="NCBI Taxonomy" id="393011"/>
    <lineage>
        <taxon>Bacteria</taxon>
        <taxon>Pseudomonadati</taxon>
        <taxon>Pseudomonadota</taxon>
        <taxon>Gammaproteobacteria</taxon>
        <taxon>Thiotrichales</taxon>
        <taxon>Francisellaceae</taxon>
        <taxon>Francisella</taxon>
    </lineage>
</organism>
<sequence length="262" mass="29831">MQYKTKAKKSLGQNFLQDENIIRKIVQLANIKKHDIVVEIGPGLGALTRYLLSSSNNVSVVEFDASVIDTLIANCQKYGTPHIYNQDFLKFDISSLENSSNQKIKLIGNLPYNISSPILFKVIKDSDKIVDAHFMLQKEVVERIVSLPNSKSYGRLSVILQYHFDCSMILKIPPEVFYPQPKVDSAILRLKPKNSKELLKNYNFFEEIVKQSFAQRRKTLHNNLKSILKERKIDPSTLPVDTNLRAENLSVGDFVSLANFLS</sequence>